<accession>A8FDC1</accession>
<keyword id="KW-0030">Aminoacyl-tRNA synthetase</keyword>
<keyword id="KW-0067">ATP-binding</keyword>
<keyword id="KW-0963">Cytoplasm</keyword>
<keyword id="KW-0436">Ligase</keyword>
<keyword id="KW-0547">Nucleotide-binding</keyword>
<keyword id="KW-0648">Protein biosynthesis</keyword>
<comment type="function">
    <text evidence="1">Catalyzes the attachment of proline to tRNA(Pro) in a two-step reaction: proline is first activated by ATP to form Pro-AMP and then transferred to the acceptor end of tRNA(Pro). As ProRS can inadvertently accommodate and process non-cognate amino acids such as alanine and cysteine, to avoid such errors it has two additional distinct editing activities against alanine. One activity is designated as 'pretransfer' editing and involves the tRNA(Pro)-independent hydrolysis of activated Ala-AMP. The other activity is designated 'posttransfer' editing and involves deacylation of mischarged Ala-tRNA(Pro). The misacylated Cys-tRNA(Pro) is not edited by ProRS.</text>
</comment>
<comment type="catalytic activity">
    <reaction evidence="1">
        <text>tRNA(Pro) + L-proline + ATP = L-prolyl-tRNA(Pro) + AMP + diphosphate</text>
        <dbReference type="Rhea" id="RHEA:14305"/>
        <dbReference type="Rhea" id="RHEA-COMP:9700"/>
        <dbReference type="Rhea" id="RHEA-COMP:9702"/>
        <dbReference type="ChEBI" id="CHEBI:30616"/>
        <dbReference type="ChEBI" id="CHEBI:33019"/>
        <dbReference type="ChEBI" id="CHEBI:60039"/>
        <dbReference type="ChEBI" id="CHEBI:78442"/>
        <dbReference type="ChEBI" id="CHEBI:78532"/>
        <dbReference type="ChEBI" id="CHEBI:456215"/>
        <dbReference type="EC" id="6.1.1.15"/>
    </reaction>
</comment>
<comment type="subunit">
    <text evidence="1">Homodimer.</text>
</comment>
<comment type="subcellular location">
    <subcellularLocation>
        <location evidence="1">Cytoplasm</location>
    </subcellularLocation>
</comment>
<comment type="domain">
    <text evidence="1">Consists of three domains: the N-terminal catalytic domain, the editing domain and the C-terminal anticodon-binding domain.</text>
</comment>
<comment type="similarity">
    <text evidence="1">Belongs to the class-II aminoacyl-tRNA synthetase family. ProS type 1 subfamily.</text>
</comment>
<dbReference type="EC" id="6.1.1.15" evidence="1"/>
<dbReference type="EMBL" id="CP000813">
    <property type="protein sequence ID" value="ABV62238.1"/>
    <property type="molecule type" value="Genomic_DNA"/>
</dbReference>
<dbReference type="RefSeq" id="WP_012009985.1">
    <property type="nucleotide sequence ID" value="NZ_VEIS01000003.1"/>
</dbReference>
<dbReference type="SMR" id="A8FDC1"/>
<dbReference type="STRING" id="315750.BPUM_1556"/>
<dbReference type="GeneID" id="5620819"/>
<dbReference type="KEGG" id="bpu:BPUM_1556"/>
<dbReference type="eggNOG" id="COG0442">
    <property type="taxonomic scope" value="Bacteria"/>
</dbReference>
<dbReference type="HOGENOM" id="CLU_016739_0_0_9"/>
<dbReference type="OrthoDB" id="9809052at2"/>
<dbReference type="Proteomes" id="UP000001355">
    <property type="component" value="Chromosome"/>
</dbReference>
<dbReference type="GO" id="GO:0005829">
    <property type="term" value="C:cytosol"/>
    <property type="evidence" value="ECO:0007669"/>
    <property type="project" value="TreeGrafter"/>
</dbReference>
<dbReference type="GO" id="GO:0002161">
    <property type="term" value="F:aminoacyl-tRNA deacylase activity"/>
    <property type="evidence" value="ECO:0007669"/>
    <property type="project" value="InterPro"/>
</dbReference>
<dbReference type="GO" id="GO:0005524">
    <property type="term" value="F:ATP binding"/>
    <property type="evidence" value="ECO:0007669"/>
    <property type="project" value="UniProtKB-UniRule"/>
</dbReference>
<dbReference type="GO" id="GO:0140096">
    <property type="term" value="F:catalytic activity, acting on a protein"/>
    <property type="evidence" value="ECO:0007669"/>
    <property type="project" value="UniProtKB-ARBA"/>
</dbReference>
<dbReference type="GO" id="GO:0004827">
    <property type="term" value="F:proline-tRNA ligase activity"/>
    <property type="evidence" value="ECO:0007669"/>
    <property type="project" value="UniProtKB-UniRule"/>
</dbReference>
<dbReference type="GO" id="GO:0016740">
    <property type="term" value="F:transferase activity"/>
    <property type="evidence" value="ECO:0007669"/>
    <property type="project" value="UniProtKB-ARBA"/>
</dbReference>
<dbReference type="GO" id="GO:0006433">
    <property type="term" value="P:prolyl-tRNA aminoacylation"/>
    <property type="evidence" value="ECO:0007669"/>
    <property type="project" value="UniProtKB-UniRule"/>
</dbReference>
<dbReference type="CDD" id="cd04334">
    <property type="entry name" value="ProRS-INS"/>
    <property type="match status" value="1"/>
</dbReference>
<dbReference type="CDD" id="cd00861">
    <property type="entry name" value="ProRS_anticodon_short"/>
    <property type="match status" value="1"/>
</dbReference>
<dbReference type="CDD" id="cd00779">
    <property type="entry name" value="ProRS_core_prok"/>
    <property type="match status" value="1"/>
</dbReference>
<dbReference type="FunFam" id="3.30.930.10:FF:000043">
    <property type="entry name" value="Proline--tRNA ligase"/>
    <property type="match status" value="1"/>
</dbReference>
<dbReference type="FunFam" id="3.40.50.800:FF:000011">
    <property type="entry name" value="Proline--tRNA ligase"/>
    <property type="match status" value="1"/>
</dbReference>
<dbReference type="Gene3D" id="3.40.50.800">
    <property type="entry name" value="Anticodon-binding domain"/>
    <property type="match status" value="1"/>
</dbReference>
<dbReference type="Gene3D" id="3.30.930.10">
    <property type="entry name" value="Bira Bifunctional Protein, Domain 2"/>
    <property type="match status" value="2"/>
</dbReference>
<dbReference type="HAMAP" id="MF_01569">
    <property type="entry name" value="Pro_tRNA_synth_type1"/>
    <property type="match status" value="1"/>
</dbReference>
<dbReference type="InterPro" id="IPR002314">
    <property type="entry name" value="aa-tRNA-synt_IIb"/>
</dbReference>
<dbReference type="InterPro" id="IPR006195">
    <property type="entry name" value="aa-tRNA-synth_II"/>
</dbReference>
<dbReference type="InterPro" id="IPR045864">
    <property type="entry name" value="aa-tRNA-synth_II/BPL/LPL"/>
</dbReference>
<dbReference type="InterPro" id="IPR004154">
    <property type="entry name" value="Anticodon-bd"/>
</dbReference>
<dbReference type="InterPro" id="IPR036621">
    <property type="entry name" value="Anticodon-bd_dom_sf"/>
</dbReference>
<dbReference type="InterPro" id="IPR002316">
    <property type="entry name" value="Pro-tRNA-ligase_IIa"/>
</dbReference>
<dbReference type="InterPro" id="IPR004500">
    <property type="entry name" value="Pro-tRNA-synth_IIa_bac-type"/>
</dbReference>
<dbReference type="InterPro" id="IPR023717">
    <property type="entry name" value="Pro-tRNA-Synthase_IIa_type1"/>
</dbReference>
<dbReference type="InterPro" id="IPR050062">
    <property type="entry name" value="Pro-tRNA_synthetase"/>
</dbReference>
<dbReference type="InterPro" id="IPR044140">
    <property type="entry name" value="ProRS_anticodon_short"/>
</dbReference>
<dbReference type="InterPro" id="IPR033730">
    <property type="entry name" value="ProRS_core_prok"/>
</dbReference>
<dbReference type="InterPro" id="IPR036754">
    <property type="entry name" value="YbaK/aa-tRNA-synt-asso_dom_sf"/>
</dbReference>
<dbReference type="InterPro" id="IPR007214">
    <property type="entry name" value="YbaK/aa-tRNA-synth-assoc-dom"/>
</dbReference>
<dbReference type="NCBIfam" id="NF006625">
    <property type="entry name" value="PRK09194.1"/>
    <property type="match status" value="1"/>
</dbReference>
<dbReference type="NCBIfam" id="TIGR00409">
    <property type="entry name" value="proS_fam_II"/>
    <property type="match status" value="1"/>
</dbReference>
<dbReference type="PANTHER" id="PTHR42753">
    <property type="entry name" value="MITOCHONDRIAL RIBOSOME PROTEIN L39/PROLYL-TRNA LIGASE FAMILY MEMBER"/>
    <property type="match status" value="1"/>
</dbReference>
<dbReference type="PANTHER" id="PTHR42753:SF2">
    <property type="entry name" value="PROLINE--TRNA LIGASE"/>
    <property type="match status" value="1"/>
</dbReference>
<dbReference type="Pfam" id="PF03129">
    <property type="entry name" value="HGTP_anticodon"/>
    <property type="match status" value="1"/>
</dbReference>
<dbReference type="Pfam" id="PF00587">
    <property type="entry name" value="tRNA-synt_2b"/>
    <property type="match status" value="1"/>
</dbReference>
<dbReference type="Pfam" id="PF04073">
    <property type="entry name" value="tRNA_edit"/>
    <property type="match status" value="1"/>
</dbReference>
<dbReference type="PIRSF" id="PIRSF001535">
    <property type="entry name" value="ProRS_1"/>
    <property type="match status" value="1"/>
</dbReference>
<dbReference type="PRINTS" id="PR01046">
    <property type="entry name" value="TRNASYNTHPRO"/>
</dbReference>
<dbReference type="SUPFAM" id="SSF52954">
    <property type="entry name" value="Class II aaRS ABD-related"/>
    <property type="match status" value="1"/>
</dbReference>
<dbReference type="SUPFAM" id="SSF55681">
    <property type="entry name" value="Class II aaRS and biotin synthetases"/>
    <property type="match status" value="1"/>
</dbReference>
<dbReference type="SUPFAM" id="SSF55826">
    <property type="entry name" value="YbaK/ProRS associated domain"/>
    <property type="match status" value="1"/>
</dbReference>
<dbReference type="PROSITE" id="PS50862">
    <property type="entry name" value="AA_TRNA_LIGASE_II"/>
    <property type="match status" value="1"/>
</dbReference>
<organism>
    <name type="scientific">Bacillus pumilus (strain SAFR-032)</name>
    <dbReference type="NCBI Taxonomy" id="315750"/>
    <lineage>
        <taxon>Bacteria</taxon>
        <taxon>Bacillati</taxon>
        <taxon>Bacillota</taxon>
        <taxon>Bacilli</taxon>
        <taxon>Bacillales</taxon>
        <taxon>Bacillaceae</taxon>
        <taxon>Bacillus</taxon>
    </lineage>
</organism>
<gene>
    <name evidence="1" type="primary">proS</name>
    <name type="ordered locus">BPUM_1556</name>
</gene>
<proteinExistence type="inferred from homology"/>
<sequence length="565" mass="63357">MRQSLTFIPTLREVPADAEAKSHQLLVRAGFIRQNTSGIYHYLPLAHKVIQHIQSIVRKEMEKAGAAELLMPVLQQAEMWQESGRWYTYGPELMRMKDRHGREFALGPTHEEVITSLVRSEVKSYKKLPLTLYQIQSKFRDEQRPRFGLLRGREFIMKDAYSFHSSPESLDDTYNKMFTAYSNVFSKVGLNFRPVIADSGAMGGKDTHEFMALSEVGEDTIAYSDTSSYAANIEMAEAVYQGEEANPADFKELEKVHTPQVKTIQDIAGFLDVDPSLCIKSVLFKADDAYVLILTRGDHEVNDVKVKNLVGAQLVELATREEVLEVIGTEPGFVGPVKLEAEVDIYADLTVKGMTNAVAGANEADYHYVNVNPARDVSVKEFTDLRFIQEGDVSPDGEGTIQFAKGIEVGQVFKLGTRYSESMDATYLDENGRAQPMIMGCYGIGISRTLSAIVEQHHDEKGIIWPEAVAPYDLHLLALNMKNDAQKELAETLYERLENEGFDVLFDDRQERAGVKFADSDLIGLPIRISCGKRSEEGIVEVKFRKSGESHEVSVDELISFIRQA</sequence>
<protein>
    <recommendedName>
        <fullName evidence="1">Proline--tRNA ligase</fullName>
        <ecNumber evidence="1">6.1.1.15</ecNumber>
    </recommendedName>
    <alternativeName>
        <fullName evidence="1">Prolyl-tRNA synthetase</fullName>
        <shortName evidence="1">ProRS</shortName>
    </alternativeName>
</protein>
<name>SYP_BACP2</name>
<reference key="1">
    <citation type="journal article" date="2007" name="PLoS ONE">
        <title>Paradoxical DNA repair and peroxide resistance gene conservation in Bacillus pumilus SAFR-032.</title>
        <authorList>
            <person name="Gioia J."/>
            <person name="Yerrapragada S."/>
            <person name="Qin X."/>
            <person name="Jiang H."/>
            <person name="Igboeli O.C."/>
            <person name="Muzny D."/>
            <person name="Dugan-Rocha S."/>
            <person name="Ding Y."/>
            <person name="Hawes A."/>
            <person name="Liu W."/>
            <person name="Perez L."/>
            <person name="Kovar C."/>
            <person name="Dinh H."/>
            <person name="Lee S."/>
            <person name="Nazareth L."/>
            <person name="Blyth P."/>
            <person name="Holder M."/>
            <person name="Buhay C."/>
            <person name="Tirumalai M.R."/>
            <person name="Liu Y."/>
            <person name="Dasgupta I."/>
            <person name="Bokhetache L."/>
            <person name="Fujita M."/>
            <person name="Karouia F."/>
            <person name="Eswara Moorthy P."/>
            <person name="Siefert J."/>
            <person name="Uzman A."/>
            <person name="Buzumbo P."/>
            <person name="Verma A."/>
            <person name="Zwiya H."/>
            <person name="McWilliams B.D."/>
            <person name="Olowu A."/>
            <person name="Clinkenbeard K.D."/>
            <person name="Newcombe D."/>
            <person name="Golebiewski L."/>
            <person name="Petrosino J.F."/>
            <person name="Nicholson W.L."/>
            <person name="Fox G.E."/>
            <person name="Venkateswaran K."/>
            <person name="Highlander S.K."/>
            <person name="Weinstock G.M."/>
        </authorList>
    </citation>
    <scope>NUCLEOTIDE SEQUENCE [LARGE SCALE GENOMIC DNA]</scope>
    <source>
        <strain>SAFR-032</strain>
    </source>
</reference>
<evidence type="ECO:0000255" key="1">
    <source>
        <dbReference type="HAMAP-Rule" id="MF_01569"/>
    </source>
</evidence>
<feature type="chain" id="PRO_1000069121" description="Proline--tRNA ligase">
    <location>
        <begin position="1"/>
        <end position="565"/>
    </location>
</feature>